<evidence type="ECO:0000250" key="1"/>
<evidence type="ECO:0000255" key="2">
    <source>
        <dbReference type="PROSITE-ProRule" id="PRU00169"/>
    </source>
</evidence>
<evidence type="ECO:0000255" key="3">
    <source>
        <dbReference type="PROSITE-ProRule" id="PRU01091"/>
    </source>
</evidence>
<evidence type="ECO:0000305" key="4"/>
<proteinExistence type="inferred from homology"/>
<dbReference type="EMBL" id="CP000479">
    <property type="protein sequence ID" value="ABK66309.1"/>
    <property type="molecule type" value="Genomic_DNA"/>
</dbReference>
<dbReference type="RefSeq" id="WP_003872811.1">
    <property type="nucleotide sequence ID" value="NC_008595.1"/>
</dbReference>
<dbReference type="SMR" id="A0QBQ9"/>
<dbReference type="GeneID" id="75268895"/>
<dbReference type="KEGG" id="mav:MAV_1094"/>
<dbReference type="HOGENOM" id="CLU_000445_30_1_11"/>
<dbReference type="Proteomes" id="UP000001574">
    <property type="component" value="Chromosome"/>
</dbReference>
<dbReference type="GO" id="GO:0005829">
    <property type="term" value="C:cytosol"/>
    <property type="evidence" value="ECO:0007669"/>
    <property type="project" value="TreeGrafter"/>
</dbReference>
<dbReference type="GO" id="GO:0032993">
    <property type="term" value="C:protein-DNA complex"/>
    <property type="evidence" value="ECO:0007669"/>
    <property type="project" value="TreeGrafter"/>
</dbReference>
<dbReference type="GO" id="GO:0000156">
    <property type="term" value="F:phosphorelay response regulator activity"/>
    <property type="evidence" value="ECO:0007669"/>
    <property type="project" value="TreeGrafter"/>
</dbReference>
<dbReference type="GO" id="GO:0000976">
    <property type="term" value="F:transcription cis-regulatory region binding"/>
    <property type="evidence" value="ECO:0007669"/>
    <property type="project" value="TreeGrafter"/>
</dbReference>
<dbReference type="GO" id="GO:0006355">
    <property type="term" value="P:regulation of DNA-templated transcription"/>
    <property type="evidence" value="ECO:0007669"/>
    <property type="project" value="InterPro"/>
</dbReference>
<dbReference type="CDD" id="cd17627">
    <property type="entry name" value="REC_OmpR_PrrA-like"/>
    <property type="match status" value="1"/>
</dbReference>
<dbReference type="CDD" id="cd00383">
    <property type="entry name" value="trans_reg_C"/>
    <property type="match status" value="1"/>
</dbReference>
<dbReference type="FunFam" id="3.40.50.2300:FF:000001">
    <property type="entry name" value="DNA-binding response regulator PhoB"/>
    <property type="match status" value="1"/>
</dbReference>
<dbReference type="FunFam" id="1.10.10.10:FF:000005">
    <property type="entry name" value="Two-component system response regulator"/>
    <property type="match status" value="1"/>
</dbReference>
<dbReference type="Gene3D" id="3.40.50.2300">
    <property type="match status" value="1"/>
</dbReference>
<dbReference type="Gene3D" id="6.10.250.690">
    <property type="match status" value="1"/>
</dbReference>
<dbReference type="Gene3D" id="1.10.10.10">
    <property type="entry name" value="Winged helix-like DNA-binding domain superfamily/Winged helix DNA-binding domain"/>
    <property type="match status" value="1"/>
</dbReference>
<dbReference type="InterPro" id="IPR011006">
    <property type="entry name" value="CheY-like_superfamily"/>
</dbReference>
<dbReference type="InterPro" id="IPR001867">
    <property type="entry name" value="OmpR/PhoB-type_DNA-bd"/>
</dbReference>
<dbReference type="InterPro" id="IPR001789">
    <property type="entry name" value="Sig_transdc_resp-reg_receiver"/>
</dbReference>
<dbReference type="InterPro" id="IPR039420">
    <property type="entry name" value="WalR-like"/>
</dbReference>
<dbReference type="InterPro" id="IPR036388">
    <property type="entry name" value="WH-like_DNA-bd_sf"/>
</dbReference>
<dbReference type="PANTHER" id="PTHR48111">
    <property type="entry name" value="REGULATOR OF RPOS"/>
    <property type="match status" value="1"/>
</dbReference>
<dbReference type="PANTHER" id="PTHR48111:SF22">
    <property type="entry name" value="REGULATOR OF RPOS"/>
    <property type="match status" value="1"/>
</dbReference>
<dbReference type="Pfam" id="PF00072">
    <property type="entry name" value="Response_reg"/>
    <property type="match status" value="1"/>
</dbReference>
<dbReference type="Pfam" id="PF00486">
    <property type="entry name" value="Trans_reg_C"/>
    <property type="match status" value="1"/>
</dbReference>
<dbReference type="SMART" id="SM00448">
    <property type="entry name" value="REC"/>
    <property type="match status" value="1"/>
</dbReference>
<dbReference type="SMART" id="SM00862">
    <property type="entry name" value="Trans_reg_C"/>
    <property type="match status" value="1"/>
</dbReference>
<dbReference type="SUPFAM" id="SSF52172">
    <property type="entry name" value="CheY-like"/>
    <property type="match status" value="1"/>
</dbReference>
<dbReference type="PROSITE" id="PS51755">
    <property type="entry name" value="OMPR_PHOB"/>
    <property type="match status" value="1"/>
</dbReference>
<dbReference type="PROSITE" id="PS50110">
    <property type="entry name" value="RESPONSE_REGULATORY"/>
    <property type="match status" value="1"/>
</dbReference>
<name>MPRA_MYCA1</name>
<feature type="chain" id="PRO_0000308418" description="Response regulator MprA">
    <location>
        <begin position="1"/>
        <end position="228"/>
    </location>
</feature>
<feature type="domain" description="Response regulatory" evidence="2">
    <location>
        <begin position="2"/>
        <end position="116"/>
    </location>
</feature>
<feature type="DNA-binding region" description="OmpR/PhoB-type" evidence="3">
    <location>
        <begin position="127"/>
        <end position="225"/>
    </location>
</feature>
<feature type="modified residue" description="4-aspartylphosphate" evidence="2">
    <location>
        <position position="46"/>
    </location>
</feature>
<protein>
    <recommendedName>
        <fullName>Response regulator MprA</fullName>
    </recommendedName>
    <alternativeName>
        <fullName>Mycobacterial persistence regulator A</fullName>
    </alternativeName>
</protein>
<comment type="function">
    <text evidence="1">Member of the two-component regulatory system MprB/MprA which contributes to maintaining a balance among several systems involved in stress resistance and is required for establishment and maintenance of persistent infection in the host. Functions as a transcriptional regulator that recognizes a 19-bp nucleotide motif comprizing two loosely conserved 8-bp direct DNA-binding motif repeats separated by a 3-bp spacer region (By similarity).</text>
</comment>
<comment type="subcellular location">
    <subcellularLocation>
        <location evidence="4">Cytoplasm</location>
    </subcellularLocation>
</comment>
<comment type="PTM">
    <text evidence="1">Phosphorylated and dephosphorylated by MprB.</text>
</comment>
<reference key="1">
    <citation type="submission" date="2006-10" db="EMBL/GenBank/DDBJ databases">
        <authorList>
            <person name="Fleischmann R.D."/>
            <person name="Dodson R.J."/>
            <person name="Haft D.H."/>
            <person name="Merkel J.S."/>
            <person name="Nelson W.C."/>
            <person name="Fraser C.M."/>
        </authorList>
    </citation>
    <scope>NUCLEOTIDE SEQUENCE [LARGE SCALE GENOMIC DNA]</scope>
    <source>
        <strain>104</strain>
    </source>
</reference>
<sequence>MRILVVDDDRAVRESLRRSLSFNGYSVELAHDGVEALDMIASDRPDALVLDVMMPRLDGLEVCRQLRSTGDDLPILVLTARDSVSERVAGLDAGADDYLPKPFALEELLARMRALLRRTKPEDDAESVAMTFSDLTLDPVTREVTRGQRRISLTRTEFALLEMLIANPRRVLTRSRILEEVWGFDFPTSGNALEVYVGYLRRKTEADGEPRLIHTVRGVGYVLRETPP</sequence>
<gene>
    <name type="primary">mprA</name>
    <name type="ordered locus">MAV_1094</name>
</gene>
<keyword id="KW-0963">Cytoplasm</keyword>
<keyword id="KW-0238">DNA-binding</keyword>
<keyword id="KW-0597">Phosphoprotein</keyword>
<keyword id="KW-0346">Stress response</keyword>
<keyword id="KW-0804">Transcription</keyword>
<keyword id="KW-0805">Transcription regulation</keyword>
<keyword id="KW-0902">Two-component regulatory system</keyword>
<keyword id="KW-0843">Virulence</keyword>
<accession>A0QBQ9</accession>
<organism>
    <name type="scientific">Mycobacterium avium (strain 104)</name>
    <dbReference type="NCBI Taxonomy" id="243243"/>
    <lineage>
        <taxon>Bacteria</taxon>
        <taxon>Bacillati</taxon>
        <taxon>Actinomycetota</taxon>
        <taxon>Actinomycetes</taxon>
        <taxon>Mycobacteriales</taxon>
        <taxon>Mycobacteriaceae</taxon>
        <taxon>Mycobacterium</taxon>
        <taxon>Mycobacterium avium complex (MAC)</taxon>
    </lineage>
</organism>